<organism>
    <name type="scientific">Influenza A virus (strain A/Duck/England/1/1956 H11N6)</name>
    <dbReference type="NCBI Taxonomy" id="383550"/>
    <lineage>
        <taxon>Viruses</taxon>
        <taxon>Riboviria</taxon>
        <taxon>Orthornavirae</taxon>
        <taxon>Negarnaviricota</taxon>
        <taxon>Polyploviricotina</taxon>
        <taxon>Insthoviricetes</taxon>
        <taxon>Articulavirales</taxon>
        <taxon>Orthomyxoviridae</taxon>
        <taxon>Alphainfluenzavirus</taxon>
        <taxon>Alphainfluenzavirus influenzae</taxon>
        <taxon>Influenza A virus</taxon>
    </lineage>
</organism>
<comment type="function">
    <text evidence="1">Inhibits post-transcriptional processing of cellular pre-mRNA, by binding and inhibiting two cellular proteins that are required for the 3'-end processing of cellular pre-mRNAs: the 30 kDa cleavage and polyadenylation specificity factor/CPSF4 and the poly(A)-binding protein 2/PABPN1. In turn, unprocessed 3' end pre-mRNAs accumulate in the host nucleus and are no longer exported to the cytoplasm. Cellular protein synthesis is thereby shut off very early after virus infection. Viral protein synthesis is not affected by the inhibition of the cellular 3' end processing machinery because the poly(A) tails of viral mRNAs are produced by the viral polymerase through a stuttering mechanism. Prevents the establishment of the cellular antiviral state by inhibiting TRIM25-mediated RIGI ubiquitination, which normally triggers the antiviral transduction signal that leads to the activation of type I IFN genes by transcription factors IRF3 and IRF7. Also binds poly(A) and U6 snRNA. Inhibits the integrated stress response (ISR) in the infected cell by blocking dsRNA binding by EIF2AK2/PKR and further phosphorylation of EIF2S1/EIF-2ALPHA. Stress granule formation is thus inhibited, which allows protein synthesis and viral replication.</text>
</comment>
<comment type="subunit">
    <text evidence="1">Homodimer. Interacts with host TRIM25 (via coiled coil); this interaction specifically inhibits TRIM25 multimerization and TRIM25-mediated RIGI CARD ubiquitination. Interacts with human EIF2AK2/PKR, CPSF4, IVNS1ABP and PABPN1.</text>
</comment>
<comment type="subcellular location">
    <subcellularLocation>
        <location evidence="1">Host nucleus</location>
    </subcellularLocation>
    <subcellularLocation>
        <location evidence="1">Host cytoplasm</location>
    </subcellularLocation>
    <text evidence="1">In uninfected, transfected cells, NS1 is localized in the nucleus. Only in virus infected cells, the nuclear export signal is unveiled, presumably by a viral protein, and a fraction of NS1 is exported in the cytoplasm.</text>
</comment>
<comment type="alternative products">
    <event type="alternative splicing"/>
    <isoform>
        <id>P08272-1</id>
        <name>NS1</name>
        <sequence type="displayed"/>
    </isoform>
    <isoform>
        <id>P08273-1</id>
        <name>NEP</name>
        <name>NS2</name>
        <sequence type="external"/>
    </isoform>
</comment>
<comment type="domain">
    <text evidence="1">The dsRNA-binding region is required for suppression of RNA silencing.</text>
</comment>
<comment type="PTM">
    <text evidence="1">Upon interferon induction, ISGylated via host HERC5; this results in the impairment of NS1 interaction with RNA targets due to its inability to form homodimers and to interact with host EIF2AK2/PKR.</text>
</comment>
<comment type="similarity">
    <text evidence="1">Belongs to the influenza A viruses NS1 family.</text>
</comment>
<protein>
    <recommendedName>
        <fullName evidence="1">Non-structural protein 1</fullName>
        <shortName evidence="1">NS1</shortName>
    </recommendedName>
    <alternativeName>
        <fullName evidence="1">NS1A</fullName>
    </alternativeName>
</protein>
<name>NS1_I56A2</name>
<evidence type="ECO:0000255" key="1">
    <source>
        <dbReference type="HAMAP-Rule" id="MF_04066"/>
    </source>
</evidence>
<evidence type="ECO:0000256" key="2">
    <source>
        <dbReference type="SAM" id="MobiDB-lite"/>
    </source>
</evidence>
<organismHost>
    <name type="scientific">Aves</name>
    <dbReference type="NCBI Taxonomy" id="8782"/>
</organismHost>
<reference key="1">
    <citation type="journal article" date="2006" name="Science">
        <title>Large-scale sequence analysis of avian influenza isolates.</title>
        <authorList>
            <person name="Obenauer J.C."/>
            <person name="Denson J."/>
            <person name="Mehta P.K."/>
            <person name="Su X."/>
            <person name="Mukatira S."/>
            <person name="Finkelstein D.B."/>
            <person name="Xu X."/>
            <person name="Wang J."/>
            <person name="Ma J."/>
            <person name="Fan Y."/>
            <person name="Rakestraw K.M."/>
            <person name="Webster R.G."/>
            <person name="Hoffmann E."/>
            <person name="Krauss S."/>
            <person name="Zheng J."/>
            <person name="Zhang Z."/>
            <person name="Naeve C.W."/>
        </authorList>
    </citation>
    <scope>NUCLEOTIDE SEQUENCE [GENOMIC RNA]</scope>
</reference>
<reference key="2">
    <citation type="journal article" date="1987" name="Virology">
        <title>Genetic divergence of the NS genes of avian influenza viruses.</title>
        <authorList>
            <person name="Nakajima K."/>
            <person name="Nobusawa E."/>
            <person name="Ogawa T."/>
            <person name="Nakajima S."/>
        </authorList>
    </citation>
    <scope>NUCLEOTIDE SEQUENCE [GENOMIC RNA] OF 4-230</scope>
</reference>
<reference key="3">
    <citation type="journal article" date="2003" name="Virology">
        <title>Intracellular warfare between human influenza viruses and human cells: the roles of the viral NS1 protein.</title>
        <authorList>
            <person name="Krug R.M."/>
            <person name="Yuan W."/>
            <person name="Noah D.L."/>
            <person name="Latham A.G."/>
        </authorList>
    </citation>
    <scope>REVIEW</scope>
</reference>
<accession>P08272</accession>
<accession>Q0A431</accession>
<gene>
    <name evidence="1" type="primary">NS</name>
</gene>
<keyword id="KW-0025">Alternative splicing</keyword>
<keyword id="KW-1262">Eukaryotic host gene expression shutoff by virus</keyword>
<keyword id="KW-1035">Host cytoplasm</keyword>
<keyword id="KW-1190">Host gene expression shutoff by virus</keyword>
<keyword id="KW-1192">Host mRNA suppression by virus</keyword>
<keyword id="KW-1048">Host nucleus</keyword>
<keyword id="KW-0945">Host-virus interaction</keyword>
<keyword id="KW-1090">Inhibition of host innate immune response by virus</keyword>
<keyword id="KW-1114">Inhibition of host interferon signaling pathway by virus</keyword>
<keyword id="KW-1102">Inhibition of host PKR by virus</keyword>
<keyword id="KW-1103">Inhibition of host pre-mRNA processing by virus</keyword>
<keyword id="KW-1088">Inhibition of host RIG-I by virus</keyword>
<keyword id="KW-1113">Inhibition of host RLR pathway by virus</keyword>
<keyword id="KW-0922">Interferon antiviral system evasion</keyword>
<keyword id="KW-0694">RNA-binding</keyword>
<keyword id="KW-0832">Ubl conjugation</keyword>
<keyword id="KW-0899">Viral immunoevasion</keyword>
<feature type="chain" id="PRO_0000078926" description="Non-structural protein 1">
    <location>
        <begin position="1"/>
        <end position="230"/>
    </location>
</feature>
<feature type="region of interest" description="RNA-binding and homodimerization" evidence="1">
    <location>
        <begin position="1"/>
        <end position="73"/>
    </location>
</feature>
<feature type="region of interest" description="CPSF4-binding" evidence="1">
    <location>
        <begin position="180"/>
        <end position="215"/>
    </location>
</feature>
<feature type="region of interest" description="Disordered" evidence="2">
    <location>
        <begin position="205"/>
        <end position="230"/>
    </location>
</feature>
<feature type="region of interest" description="PABPN1-binding" evidence="1">
    <location>
        <begin position="223"/>
        <end position="230"/>
    </location>
</feature>
<feature type="short sequence motif" description="Nuclear localization signal" evidence="1">
    <location>
        <begin position="34"/>
        <end position="38"/>
    </location>
</feature>
<feature type="short sequence motif" description="Nuclear export signal" evidence="1">
    <location>
        <begin position="137"/>
        <end position="146"/>
    </location>
</feature>
<feature type="sequence conflict" description="In Ref. 2; AAA43510." ref="2">
    <original>P</original>
    <variation>S</variation>
    <location>
        <position position="87"/>
    </location>
</feature>
<feature type="sequence conflict" description="In Ref. 2; AAA43510." ref="2">
    <original>VF</original>
    <variation>IC</variation>
    <location>
        <begin position="137"/>
        <end position="138"/>
    </location>
</feature>
<feature type="sequence conflict" description="In Ref. 2; AAA43510." ref="2">
    <original>A</original>
    <variation>T</variation>
    <location>
        <position position="149"/>
    </location>
</feature>
<proteinExistence type="inferred from homology"/>
<dbReference type="EMBL" id="CY014683">
    <property type="protein sequence ID" value="ABI84550.1"/>
    <property type="molecule type" value="Genomic_RNA"/>
</dbReference>
<dbReference type="EMBL" id="M16563">
    <property type="protein sequence ID" value="AAA43510.1"/>
    <property type="molecule type" value="Genomic_RNA"/>
</dbReference>
<dbReference type="SMR" id="P08272"/>
<dbReference type="Proteomes" id="UP000155465">
    <property type="component" value="Genome"/>
</dbReference>
<dbReference type="GO" id="GO:0030430">
    <property type="term" value="C:host cell cytoplasm"/>
    <property type="evidence" value="ECO:0007669"/>
    <property type="project" value="UniProtKB-SubCell"/>
</dbReference>
<dbReference type="GO" id="GO:0042025">
    <property type="term" value="C:host cell nucleus"/>
    <property type="evidence" value="ECO:0007669"/>
    <property type="project" value="UniProtKB-SubCell"/>
</dbReference>
<dbReference type="GO" id="GO:0030291">
    <property type="term" value="F:protein serine/threonine kinase inhibitor activity"/>
    <property type="evidence" value="ECO:0007669"/>
    <property type="project" value="UniProtKB-KW"/>
</dbReference>
<dbReference type="GO" id="GO:0003723">
    <property type="term" value="F:RNA binding"/>
    <property type="evidence" value="ECO:0007669"/>
    <property type="project" value="UniProtKB-KW"/>
</dbReference>
<dbReference type="GO" id="GO:0039540">
    <property type="term" value="P:symbiont-mediated suppression of host cytoplasmic pattern recognition receptor signaling pathway via inhibition of RIG-I activity"/>
    <property type="evidence" value="ECO:0007669"/>
    <property type="project" value="UniProtKB-KW"/>
</dbReference>
<dbReference type="GO" id="GO:0039657">
    <property type="term" value="P:symbiont-mediated suppression of host gene expression"/>
    <property type="evidence" value="ECO:0007669"/>
    <property type="project" value="UniProtKB-KW"/>
</dbReference>
<dbReference type="GO" id="GO:0039524">
    <property type="term" value="P:symbiont-mediated suppression of host mRNA processing"/>
    <property type="evidence" value="ECO:0007669"/>
    <property type="project" value="UniProtKB-KW"/>
</dbReference>
<dbReference type="GO" id="GO:0039580">
    <property type="term" value="P:symbiont-mediated suppression of host PKR/eIFalpha signaling"/>
    <property type="evidence" value="ECO:0007669"/>
    <property type="project" value="UniProtKB-KW"/>
</dbReference>
<dbReference type="GO" id="GO:0039502">
    <property type="term" value="P:symbiont-mediated suppression of host type I interferon-mediated signaling pathway"/>
    <property type="evidence" value="ECO:0007669"/>
    <property type="project" value="UniProtKB-KW"/>
</dbReference>
<dbReference type="FunFam" id="1.10.287.10:FF:000001">
    <property type="entry name" value="Non-structural protein 1"/>
    <property type="match status" value="1"/>
</dbReference>
<dbReference type="FunFam" id="3.30.420.330:FF:000001">
    <property type="entry name" value="Non-structural protein 1"/>
    <property type="match status" value="1"/>
</dbReference>
<dbReference type="Gene3D" id="3.30.420.330">
    <property type="entry name" value="Influenza virus non-structural protein, effector domain"/>
    <property type="match status" value="1"/>
</dbReference>
<dbReference type="Gene3D" id="1.10.287.10">
    <property type="entry name" value="S15/NS1, RNA-binding"/>
    <property type="match status" value="1"/>
</dbReference>
<dbReference type="HAMAP" id="MF_04066">
    <property type="entry name" value="INFV_NS1"/>
    <property type="match status" value="1"/>
</dbReference>
<dbReference type="InterPro" id="IPR004208">
    <property type="entry name" value="NS1"/>
</dbReference>
<dbReference type="InterPro" id="IPR000256">
    <property type="entry name" value="NS1A"/>
</dbReference>
<dbReference type="InterPro" id="IPR038064">
    <property type="entry name" value="NS1A_effect_dom-like_sf"/>
</dbReference>
<dbReference type="InterPro" id="IPR009068">
    <property type="entry name" value="uS15_NS1_RNA-bd_sf"/>
</dbReference>
<dbReference type="Pfam" id="PF00600">
    <property type="entry name" value="Flu_NS1"/>
    <property type="match status" value="1"/>
</dbReference>
<dbReference type="SUPFAM" id="SSF143021">
    <property type="entry name" value="Ns1 effector domain-like"/>
    <property type="match status" value="1"/>
</dbReference>
<dbReference type="SUPFAM" id="SSF47060">
    <property type="entry name" value="S15/NS1 RNA-binding domain"/>
    <property type="match status" value="1"/>
</dbReference>
<sequence>MDSNTVSSFQVDCFLWHVRKRFADQELGDAPFLDRLRRDQKSLRGRGSTLGLDIETATRAGKQIVERILEEESDEALKMTTASVPAPRYLTDMTLEEMSRDWFMLMPKQKVAGSLCIRMDQAIMDKNIILKANFSVVFNRLETLILLRAFTEEGAIVGEISPLPSLPGHTDEDVKNAIGVLIGGLEWNDNTVRVSETLQKFAWRSSNEDGRPPLPPKQKRKMARTIESEV</sequence>